<protein>
    <recommendedName>
        <fullName>Protein phosphatase 1 regulatory subunit 37</fullName>
    </recommendedName>
    <alternativeName>
        <fullName>Leucine-rich repeat-containing protein 68</fullName>
    </alternativeName>
</protein>
<accession>A7Z026</accession>
<name>PPR37_BOVIN</name>
<keyword id="KW-0433">Leucine-rich repeat</keyword>
<keyword id="KW-0597">Phosphoprotein</keyword>
<keyword id="KW-0650">Protein phosphatase inhibitor</keyword>
<keyword id="KW-1185">Reference proteome</keyword>
<keyword id="KW-0677">Repeat</keyword>
<feature type="chain" id="PRO_0000320938" description="Protein phosphatase 1 regulatory subunit 37">
    <location>
        <begin position="1"/>
        <end position="699"/>
    </location>
</feature>
<feature type="repeat" description="LRR 1">
    <location>
        <begin position="220"/>
        <end position="240"/>
    </location>
</feature>
<feature type="repeat" description="LRR 2">
    <location>
        <begin position="248"/>
        <end position="269"/>
    </location>
</feature>
<feature type="repeat" description="LRR 3">
    <location>
        <begin position="277"/>
        <end position="297"/>
    </location>
</feature>
<feature type="repeat" description="LRR 4">
    <location>
        <begin position="306"/>
        <end position="326"/>
    </location>
</feature>
<feature type="repeat" description="LRR 5">
    <location>
        <begin position="334"/>
        <end position="354"/>
    </location>
</feature>
<feature type="region of interest" description="Disordered" evidence="4">
    <location>
        <begin position="1"/>
        <end position="42"/>
    </location>
</feature>
<feature type="region of interest" description="Disordered" evidence="4">
    <location>
        <begin position="467"/>
        <end position="667"/>
    </location>
</feature>
<feature type="compositionally biased region" description="Pro residues" evidence="4">
    <location>
        <begin position="1"/>
        <end position="12"/>
    </location>
</feature>
<feature type="compositionally biased region" description="Acidic residues" evidence="4">
    <location>
        <begin position="510"/>
        <end position="525"/>
    </location>
</feature>
<feature type="compositionally biased region" description="Pro residues" evidence="4">
    <location>
        <begin position="588"/>
        <end position="613"/>
    </location>
</feature>
<feature type="compositionally biased region" description="Pro residues" evidence="4">
    <location>
        <begin position="622"/>
        <end position="642"/>
    </location>
</feature>
<feature type="modified residue" description="Phosphoserine" evidence="3">
    <location>
        <position position="50"/>
    </location>
</feature>
<feature type="modified residue" description="Phosphoserine" evidence="2">
    <location>
        <position position="56"/>
    </location>
</feature>
<feature type="modified residue" description="Phosphoserine" evidence="3">
    <location>
        <position position="566"/>
    </location>
</feature>
<evidence type="ECO:0000250" key="1"/>
<evidence type="ECO:0000250" key="2">
    <source>
        <dbReference type="UniProtKB" id="B2RYF1"/>
    </source>
</evidence>
<evidence type="ECO:0000250" key="3">
    <source>
        <dbReference type="UniProtKB" id="O75864"/>
    </source>
</evidence>
<evidence type="ECO:0000256" key="4">
    <source>
        <dbReference type="SAM" id="MobiDB-lite"/>
    </source>
</evidence>
<evidence type="ECO:0000305" key="5"/>
<gene>
    <name type="primary">PPP1R37</name>
    <name type="synonym">LRRC68</name>
</gene>
<proteinExistence type="evidence at transcript level"/>
<dbReference type="EMBL" id="BC153224">
    <property type="protein sequence ID" value="AAI53225.1"/>
    <property type="molecule type" value="mRNA"/>
</dbReference>
<dbReference type="RefSeq" id="NP_001098849.1">
    <property type="nucleotide sequence ID" value="NM_001105379.1"/>
</dbReference>
<dbReference type="SMR" id="A7Z026"/>
<dbReference type="FunCoup" id="A7Z026">
    <property type="interactions" value="1839"/>
</dbReference>
<dbReference type="STRING" id="9913.ENSBTAP00000025071"/>
<dbReference type="PaxDb" id="9913-ENSBTAP00000025071"/>
<dbReference type="Ensembl" id="ENSBTAT00000025071.6">
    <property type="protein sequence ID" value="ENSBTAP00000025071.5"/>
    <property type="gene ID" value="ENSBTAG00000018834.7"/>
</dbReference>
<dbReference type="GeneID" id="516932"/>
<dbReference type="KEGG" id="bta:516932"/>
<dbReference type="CTD" id="284352"/>
<dbReference type="VEuPathDB" id="HostDB:ENSBTAG00000018834"/>
<dbReference type="VGNC" id="VGNC:33241">
    <property type="gene designation" value="PPP1R37"/>
</dbReference>
<dbReference type="eggNOG" id="KOG1908">
    <property type="taxonomic scope" value="Eukaryota"/>
</dbReference>
<dbReference type="GeneTree" id="ENSGT00940000157454"/>
<dbReference type="HOGENOM" id="CLU_014302_0_0_1"/>
<dbReference type="InParanoid" id="A7Z026"/>
<dbReference type="OMA" id="EHELRCP"/>
<dbReference type="OrthoDB" id="10034042at2759"/>
<dbReference type="TreeFam" id="TF328391"/>
<dbReference type="Proteomes" id="UP000009136">
    <property type="component" value="Chromosome 18"/>
</dbReference>
<dbReference type="Bgee" id="ENSBTAG00000018834">
    <property type="expression patterns" value="Expressed in diaphragm and 104 other cell types or tissues"/>
</dbReference>
<dbReference type="GO" id="GO:0004864">
    <property type="term" value="F:protein phosphatase inhibitor activity"/>
    <property type="evidence" value="ECO:0007669"/>
    <property type="project" value="UniProtKB-KW"/>
</dbReference>
<dbReference type="CDD" id="cd00116">
    <property type="entry name" value="LRR_RI"/>
    <property type="match status" value="1"/>
</dbReference>
<dbReference type="FunFam" id="3.80.10.10:FF:000324">
    <property type="entry name" value="Protein phosphatase 1 regulatory subunit 37"/>
    <property type="match status" value="1"/>
</dbReference>
<dbReference type="Gene3D" id="3.80.10.10">
    <property type="entry name" value="Ribonuclease Inhibitor"/>
    <property type="match status" value="1"/>
</dbReference>
<dbReference type="InterPro" id="IPR001611">
    <property type="entry name" value="Leu-rich_rpt"/>
</dbReference>
<dbReference type="InterPro" id="IPR032675">
    <property type="entry name" value="LRR_dom_sf"/>
</dbReference>
<dbReference type="InterPro" id="IPR051279">
    <property type="entry name" value="PP1-Reg/Actin-Interact_Protein"/>
</dbReference>
<dbReference type="PANTHER" id="PTHR24112">
    <property type="entry name" value="LEUCINE-RICH REPEAT, ISOFORM F-RELATED"/>
    <property type="match status" value="1"/>
</dbReference>
<dbReference type="PANTHER" id="PTHR24112:SF9">
    <property type="entry name" value="PROTEIN PHOSPHATASE 1 REGULATORY SUBUNIT 37"/>
    <property type="match status" value="1"/>
</dbReference>
<dbReference type="Pfam" id="PF13516">
    <property type="entry name" value="LRR_6"/>
    <property type="match status" value="3"/>
</dbReference>
<dbReference type="SMART" id="SM00368">
    <property type="entry name" value="LRR_RI"/>
    <property type="match status" value="6"/>
</dbReference>
<dbReference type="SUPFAM" id="SSF52047">
    <property type="entry name" value="RNI-like"/>
    <property type="match status" value="1"/>
</dbReference>
<dbReference type="PROSITE" id="PS51450">
    <property type="entry name" value="LRR"/>
    <property type="match status" value="5"/>
</dbReference>
<organism>
    <name type="scientific">Bos taurus</name>
    <name type="common">Bovine</name>
    <dbReference type="NCBI Taxonomy" id="9913"/>
    <lineage>
        <taxon>Eukaryota</taxon>
        <taxon>Metazoa</taxon>
        <taxon>Chordata</taxon>
        <taxon>Craniata</taxon>
        <taxon>Vertebrata</taxon>
        <taxon>Euteleostomi</taxon>
        <taxon>Mammalia</taxon>
        <taxon>Eutheria</taxon>
        <taxon>Laurasiatheria</taxon>
        <taxon>Artiodactyla</taxon>
        <taxon>Ruminantia</taxon>
        <taxon>Pecora</taxon>
        <taxon>Bovidae</taxon>
        <taxon>Bovinae</taxon>
        <taxon>Bos</taxon>
    </lineage>
</organism>
<reference key="1">
    <citation type="submission" date="2007-09" db="EMBL/GenBank/DDBJ databases">
        <authorList>
            <consortium name="NIH - Mammalian Gene Collection (MGC) project"/>
        </authorList>
    </citation>
    <scope>NUCLEOTIDE SEQUENCE [LARGE SCALE MRNA]</scope>
    <source>
        <strain>Hereford</strain>
        <tissue>Fetal skin</tissue>
    </source>
</reference>
<sequence length="699" mass="75697">MEIPPQEAPPGPGADGEAEEAPVEAPSPGPASPPADGRLKAAAKRVTFPSDEDIVSGAVEPKDPWRHAQNVTVDEIIGAYKQACQKLNCRQIPKLLRQLQEFTDLGHRIDCLDLKGEKLDYKTCEALEEVFKRLQFKVVDLEQTNLDEDGASALFDMIEYYESATHLNISFNKHIGTRGWQAAAHMMRKTSCLQYLDARNTPLLDHSAPFVARALRIRSSLAVLHLESSSLSGRPLMLLATALKMNMTLRELYLADNKLNGLQDSAQLGNLLKFNCSLQILDLRNNHVLDSGLAYICEGLKEQRKGLATLVLWNNQLTHTGMAFLGMTLPHTHSLETLNLGHNPIGNEGVRNLKNGLISNRSVLRLGLASTKLTCEGAVAVAEFIAESPRLLRLDLRENEIKTGGLMALSLALKVNHSLLRLDLDREPKKEAVKSFIETQKALLAEIQNGCKRNFVLVREREEKEQRLQLSASMPEITVTEPQPDDEPREEPAAEAQENGAPGPSPGPDSDSDSDSEGEDRDEADGERAEAPCPTLVPPTDSLGPGDRSPPGCPSSPAEQRISVSSPGWGHKVFVVTRVESPPERAEPPVPPAPPGPVSPPASASPPTSPFPTPTEAASTPDPGPPEPQPPLEPPQVGPPLPNGLKPEFALALSPEPPPGPEAKVGSCGLEHELSCSKNEKELEELLLEASQESGQETL</sequence>
<comment type="function">
    <text evidence="1">Inhibits phosphatase activity of protein phosphatase 1 (PP1) complexes.</text>
</comment>
<comment type="subunit">
    <text evidence="1">Interacts with PPP1CA.</text>
</comment>
<comment type="similarity">
    <text evidence="5">Belongs to the PPP1R37 family.</text>
</comment>